<reference key="1">
    <citation type="journal article" date="1993" name="FEBS Lett.">
        <title>Molecular cloning of a novel rat G-protein-coupled receptor gene expressed prominently in lung, adrenal, and liver.</title>
        <authorList>
            <person name="Harrison J.K."/>
            <person name="Barber C.M."/>
            <person name="Lynch K.R."/>
        </authorList>
    </citation>
    <scope>NUCLEOTIDE SEQUENCE [GENOMIC DNA]</scope>
    <scope>TISSUE SPECIFICITY</scope>
</reference>
<reference key="2">
    <citation type="submission" date="1996-07" db="EMBL/GenBank/DDBJ databases">
        <authorList>
            <person name="Harrison J.K."/>
        </authorList>
    </citation>
    <scope>SEQUENCE REVISION</scope>
</reference>
<reference key="3">
    <citation type="journal article" date="1993" name="DNA Cell Biol.">
        <title>A novel putative G protein-coupled receptor highly expressed in lung and testis.</title>
        <authorList>
            <person name="Eva C."/>
            <person name="Sprengel R."/>
        </authorList>
    </citation>
    <scope>NUCLEOTIDE SEQUENCE [MRNA]</scope>
    <scope>TISSUE SPECIFICITY</scope>
</reference>
<reference key="4">
    <citation type="journal article" date="1995" name="J. Biol. Chem.">
        <title>Cloning and expression of cDNA encoding a rat adrenomedullin receptor.</title>
        <authorList>
            <person name="Kapas S."/>
            <person name="Catt K.J."/>
            <person name="Clark A.J."/>
        </authorList>
    </citation>
    <scope>NUCLEOTIDE SEQUENCE [MRNA]</scope>
    <source>
        <tissue>Lung</tissue>
    </source>
</reference>
<reference key="5">
    <citation type="journal article" date="1998" name="Biochem. Biophys. Res. Commun.">
        <title>Expression of the rat adrenomedullin receptor or a putative human adrenomedullin receptor does not correlate with adrenomedullin binding or functional response.</title>
        <authorList>
            <person name="Kennedy S.P."/>
            <person name="Sun D."/>
            <person name="Oleynek J.J."/>
            <person name="Hoth C.F."/>
            <person name="Kong J."/>
            <person name="Hill R.J."/>
        </authorList>
    </citation>
    <scope>DOUBTS ON THE ORIGINAL FUNCTION</scope>
</reference>
<reference key="6">
    <citation type="journal article" date="2012" name="Nat. Commun.">
        <title>Quantitative maps of protein phosphorylation sites across 14 different rat organs and tissues.</title>
        <authorList>
            <person name="Lundby A."/>
            <person name="Secher A."/>
            <person name="Lage K."/>
            <person name="Nordsborg N.B."/>
            <person name="Dmytriyev A."/>
            <person name="Lundby C."/>
            <person name="Olsen J.V."/>
        </authorList>
    </citation>
    <scope>PHOSPHORYLATION [LARGE SCALE ANALYSIS] AT SER-329</scope>
    <scope>IDENTIFICATION BY MASS SPECTROMETRY [LARGE SCALE ANALYSIS]</scope>
</reference>
<gene>
    <name type="primary">Gpr182</name>
    <name type="synonym">Admr</name>
</gene>
<comment type="function">
    <text>Orphan receptor.</text>
</comment>
<comment type="subcellular location">
    <subcellularLocation>
        <location>Cell membrane</location>
        <topology>Multi-pass membrane protein</topology>
    </subcellularLocation>
</comment>
<comment type="tissue specificity">
    <text evidence="3 4">Expressed in a wide variety of peripheral tissues in the adult rat with prominent expression in lung, testis, adrenal and liver.</text>
</comment>
<comment type="similarity">
    <text evidence="2">Belongs to the G-protein coupled receptor 1 family.</text>
</comment>
<comment type="caution">
    <text evidence="6">Was originally thought to be a receptor for adrenomedullin.</text>
</comment>
<protein>
    <recommendedName>
        <fullName>G-protein coupled receptor 182</fullName>
    </recommendedName>
    <alternativeName>
        <fullName>G10D</fullName>
    </alternativeName>
    <alternativeName>
        <fullName>NOW</fullName>
    </alternativeName>
</protein>
<organism>
    <name type="scientific">Rattus norvegicus</name>
    <name type="common">Rat</name>
    <dbReference type="NCBI Taxonomy" id="10116"/>
    <lineage>
        <taxon>Eukaryota</taxon>
        <taxon>Metazoa</taxon>
        <taxon>Chordata</taxon>
        <taxon>Craniata</taxon>
        <taxon>Vertebrata</taxon>
        <taxon>Euteleostomi</taxon>
        <taxon>Mammalia</taxon>
        <taxon>Eutheria</taxon>
        <taxon>Euarchontoglires</taxon>
        <taxon>Glires</taxon>
        <taxon>Rodentia</taxon>
        <taxon>Myomorpha</taxon>
        <taxon>Muroidea</taxon>
        <taxon>Muridae</taxon>
        <taxon>Murinae</taxon>
        <taxon>Rattus</taxon>
    </lineage>
</organism>
<name>GP182_RAT</name>
<keyword id="KW-1003">Cell membrane</keyword>
<keyword id="KW-1015">Disulfide bond</keyword>
<keyword id="KW-0297">G-protein coupled receptor</keyword>
<keyword id="KW-0325">Glycoprotein</keyword>
<keyword id="KW-0472">Membrane</keyword>
<keyword id="KW-0597">Phosphoprotein</keyword>
<keyword id="KW-0675">Receptor</keyword>
<keyword id="KW-1185">Reference proteome</keyword>
<keyword id="KW-0807">Transducer</keyword>
<keyword id="KW-0812">Transmembrane</keyword>
<keyword id="KW-1133">Transmembrane helix</keyword>
<sequence length="395" mass="45196">MSVIPSSRPVSTLAPDNDFREIHNWTELLHLFNQTFSDCHMELNENTKQVVLFVFYLAIFVVGLVENVLVICVNCRRSGRVGMLNLYILNMAVADLGIILSLPVWMLEVMLEYTWLWGSFSCRFIHYFYLANMYSSIFFLTCLSIDRYVTLTNTSPSWQRHQHRIRRAVCAGVWVLSAIIPLPEVVHIQLLDGSEPMCLFLAPFETYSAWALAVALSATILGFLLPFPLIAVFNILSACRLRRQGQTESRRHCLLMWAYIVVFVICWLPYHVTMLLLTLHTTHIFLHCNLVNFLYFFYEIIDCFSMLHCVANPILYNFLSPSFRGRLLSLVVRYLPKEQARAAGGRASSSSSTQHSIIITKEGSLPLQRICTPTPSETCRPPLCLRTPHLHSAIP</sequence>
<feature type="chain" id="PRO_0000069114" description="G-protein coupled receptor 182">
    <location>
        <begin position="1"/>
        <end position="395"/>
    </location>
</feature>
<feature type="topological domain" description="Extracellular" evidence="1">
    <location>
        <begin position="1"/>
        <end position="53"/>
    </location>
</feature>
<feature type="transmembrane region" description="Helical; Name=1" evidence="1">
    <location>
        <begin position="54"/>
        <end position="75"/>
    </location>
</feature>
<feature type="topological domain" description="Cytoplasmic" evidence="1">
    <location>
        <begin position="76"/>
        <end position="86"/>
    </location>
</feature>
<feature type="transmembrane region" description="Helical; Name=2" evidence="1">
    <location>
        <begin position="87"/>
        <end position="109"/>
    </location>
</feature>
<feature type="topological domain" description="Extracellular" evidence="1">
    <location>
        <begin position="110"/>
        <end position="123"/>
    </location>
</feature>
<feature type="transmembrane region" description="Helical; Name=3" evidence="1">
    <location>
        <begin position="124"/>
        <end position="145"/>
    </location>
</feature>
<feature type="topological domain" description="Cytoplasmic" evidence="1">
    <location>
        <begin position="146"/>
        <end position="166"/>
    </location>
</feature>
<feature type="transmembrane region" description="Helical; Name=4" evidence="1">
    <location>
        <begin position="167"/>
        <end position="189"/>
    </location>
</feature>
<feature type="topological domain" description="Extracellular" evidence="1">
    <location>
        <begin position="190"/>
        <end position="213"/>
    </location>
</feature>
<feature type="transmembrane region" description="Helical; Name=5" evidence="1">
    <location>
        <begin position="214"/>
        <end position="235"/>
    </location>
</feature>
<feature type="topological domain" description="Cytoplasmic" evidence="1">
    <location>
        <begin position="236"/>
        <end position="254"/>
    </location>
</feature>
<feature type="transmembrane region" description="Helical; Name=6" evidence="1">
    <location>
        <begin position="255"/>
        <end position="276"/>
    </location>
</feature>
<feature type="topological domain" description="Extracellular" evidence="1">
    <location>
        <begin position="277"/>
        <end position="295"/>
    </location>
</feature>
<feature type="transmembrane region" description="Helical; Name=7" evidence="1">
    <location>
        <begin position="296"/>
        <end position="316"/>
    </location>
</feature>
<feature type="topological domain" description="Cytoplasmic" evidence="1">
    <location>
        <begin position="317"/>
        <end position="395"/>
    </location>
</feature>
<feature type="modified residue" description="Phosphoserine" evidence="7">
    <location>
        <position position="329"/>
    </location>
</feature>
<feature type="glycosylation site" description="N-linked (GlcNAc...) asparagine" evidence="1">
    <location>
        <position position="24"/>
    </location>
</feature>
<feature type="glycosylation site" description="N-linked (GlcNAc...) asparagine" evidence="1">
    <location>
        <position position="33"/>
    </location>
</feature>
<feature type="disulfide bond" evidence="2">
    <location>
        <begin position="122"/>
        <end position="198"/>
    </location>
</feature>
<feature type="sequence conflict" description="In Ref. 3; AAA41271." evidence="5" ref="3">
    <original>RP</original>
    <variation>EA</variation>
    <location>
        <begin position="8"/>
        <end position="9"/>
    </location>
</feature>
<feature type="sequence conflict" description="In Ref. 1; AAB05356." evidence="5" ref="1">
    <original>H</original>
    <variation>R</variation>
    <location>
        <position position="40"/>
    </location>
</feature>
<feature type="sequence conflict" description="In Ref. 3; AAA41271." evidence="5" ref="3">
    <original>V</original>
    <variation>A</variation>
    <location>
        <position position="261"/>
    </location>
</feature>
<feature type="sequence conflict" description="In Ref. 1; AAB05356." evidence="5" ref="1">
    <original>V</original>
    <variation>A</variation>
    <location>
        <position position="264"/>
    </location>
</feature>
<feature type="sequence conflict" description="In Ref. 1; AAB05356." evidence="5" ref="1">
    <original>I</original>
    <variation>T</variation>
    <location>
        <position position="301"/>
    </location>
</feature>
<feature type="sequence conflict" description="In Ref. 1; AAB05356." evidence="5" ref="1">
    <original>PLQRICTPTPSETCRPPLCLRTPHLHSAIP</original>
    <variation>LAAADLHTHAIRNVQASSLPPNTSPTLCNSIAS</variation>
    <location>
        <begin position="366"/>
        <end position="395"/>
    </location>
</feature>
<dbReference type="EMBL" id="L09249">
    <property type="protein sequence ID" value="AAB05356.1"/>
    <property type="molecule type" value="Genomic_DNA"/>
</dbReference>
<dbReference type="EMBL" id="L04672">
    <property type="protein sequence ID" value="AAA41271.1"/>
    <property type="molecule type" value="mRNA"/>
</dbReference>
<dbReference type="EMBL" id="S79811">
    <property type="protein sequence ID" value="AAB35457.1"/>
    <property type="molecule type" value="mRNA"/>
</dbReference>
<dbReference type="PIR" id="S40685">
    <property type="entry name" value="S40685"/>
</dbReference>
<dbReference type="SMR" id="P31392"/>
<dbReference type="FunCoup" id="P31392">
    <property type="interactions" value="45"/>
</dbReference>
<dbReference type="STRING" id="10116.ENSRNOP00000054500"/>
<dbReference type="GuidetoPHARMACOLOGY" id="146"/>
<dbReference type="GlyCosmos" id="P31392">
    <property type="glycosylation" value="2 sites, No reported glycans"/>
</dbReference>
<dbReference type="GlyGen" id="P31392">
    <property type="glycosylation" value="3 sites"/>
</dbReference>
<dbReference type="iPTMnet" id="P31392"/>
<dbReference type="PhosphoSitePlus" id="P31392"/>
<dbReference type="PaxDb" id="10116-ENSRNOP00000054500"/>
<dbReference type="UCSC" id="RGD:61903">
    <property type="organism name" value="rat"/>
</dbReference>
<dbReference type="AGR" id="RGD:61903"/>
<dbReference type="RGD" id="61903">
    <property type="gene designation" value="Gpr182"/>
</dbReference>
<dbReference type="eggNOG" id="ENOG502QSNU">
    <property type="taxonomic scope" value="Eukaryota"/>
</dbReference>
<dbReference type="InParanoid" id="P31392"/>
<dbReference type="PRO" id="PR:P31392"/>
<dbReference type="Proteomes" id="UP000002494">
    <property type="component" value="Unplaced"/>
</dbReference>
<dbReference type="GO" id="GO:0005886">
    <property type="term" value="C:plasma membrane"/>
    <property type="evidence" value="ECO:0007669"/>
    <property type="project" value="UniProtKB-SubCell"/>
</dbReference>
<dbReference type="GO" id="GO:0001605">
    <property type="term" value="F:adrenomedullin receptor activity"/>
    <property type="evidence" value="ECO:0000314"/>
    <property type="project" value="RGD"/>
</dbReference>
<dbReference type="GO" id="GO:0001666">
    <property type="term" value="P:response to hypoxia"/>
    <property type="evidence" value="ECO:0000270"/>
    <property type="project" value="RGD"/>
</dbReference>
<dbReference type="CDD" id="cd14988">
    <property type="entry name" value="7tmA_GPR182"/>
    <property type="match status" value="1"/>
</dbReference>
<dbReference type="FunFam" id="1.20.1070.10:FF:000141">
    <property type="entry name" value="atypical chemokine receptor 3"/>
    <property type="match status" value="1"/>
</dbReference>
<dbReference type="Gene3D" id="1.20.1070.10">
    <property type="entry name" value="Rhodopsin 7-helix transmembrane proteins"/>
    <property type="match status" value="1"/>
</dbReference>
<dbReference type="InterPro" id="IPR001350">
    <property type="entry name" value="G10D_rcpt"/>
</dbReference>
<dbReference type="InterPro" id="IPR000276">
    <property type="entry name" value="GPCR_Rhodpsn"/>
</dbReference>
<dbReference type="InterPro" id="IPR017452">
    <property type="entry name" value="GPCR_Rhodpsn_7TM"/>
</dbReference>
<dbReference type="InterPro" id="IPR047143">
    <property type="entry name" value="GPER1-like"/>
</dbReference>
<dbReference type="PANTHER" id="PTHR24226:SF0">
    <property type="entry name" value="G-PROTEIN COUPLED RECEPTOR 182"/>
    <property type="match status" value="1"/>
</dbReference>
<dbReference type="PANTHER" id="PTHR24226">
    <property type="entry name" value="G-PROTEIN COUPLED RECEPTOR 182 AND ESTROGEN RECEPTOR 1"/>
    <property type="match status" value="1"/>
</dbReference>
<dbReference type="Pfam" id="PF00001">
    <property type="entry name" value="7tm_1"/>
    <property type="match status" value="1"/>
</dbReference>
<dbReference type="PRINTS" id="PR00643">
    <property type="entry name" value="G10DORPHANR"/>
</dbReference>
<dbReference type="PRINTS" id="PR00237">
    <property type="entry name" value="GPCRRHODOPSN"/>
</dbReference>
<dbReference type="SUPFAM" id="SSF81321">
    <property type="entry name" value="Family A G protein-coupled receptor-like"/>
    <property type="match status" value="1"/>
</dbReference>
<dbReference type="PROSITE" id="PS00237">
    <property type="entry name" value="G_PROTEIN_RECEP_F1_1"/>
    <property type="match status" value="1"/>
</dbReference>
<dbReference type="PROSITE" id="PS50262">
    <property type="entry name" value="G_PROTEIN_RECEP_F1_2"/>
    <property type="match status" value="1"/>
</dbReference>
<accession>P31392</accession>
<accession>Q64166</accession>
<proteinExistence type="evidence at protein level"/>
<evidence type="ECO:0000255" key="1"/>
<evidence type="ECO:0000255" key="2">
    <source>
        <dbReference type="PROSITE-ProRule" id="PRU00521"/>
    </source>
</evidence>
<evidence type="ECO:0000269" key="3">
    <source>
    </source>
</evidence>
<evidence type="ECO:0000269" key="4">
    <source>
    </source>
</evidence>
<evidence type="ECO:0000305" key="5"/>
<evidence type="ECO:0000305" key="6">
    <source>
    </source>
</evidence>
<evidence type="ECO:0007744" key="7">
    <source>
    </source>
</evidence>